<feature type="chain" id="PRO_0000047632" description="Zinc finger protein 513">
    <location>
        <begin position="1"/>
        <end position="541"/>
    </location>
</feature>
<feature type="zinc finger region" description="C2H2-type 1" evidence="2">
    <location>
        <begin position="150"/>
        <end position="172"/>
    </location>
</feature>
<feature type="zinc finger region" description="C2H2-type 2" evidence="2">
    <location>
        <begin position="178"/>
        <end position="200"/>
    </location>
</feature>
<feature type="zinc finger region" description="C2H2-type 3" evidence="2">
    <location>
        <begin position="206"/>
        <end position="228"/>
    </location>
</feature>
<feature type="zinc finger region" description="C2H2-type 4" evidence="2">
    <location>
        <begin position="360"/>
        <end position="382"/>
    </location>
</feature>
<feature type="zinc finger region" description="C2H2-type 5" evidence="2">
    <location>
        <begin position="388"/>
        <end position="410"/>
    </location>
</feature>
<feature type="zinc finger region" description="C2H2-type 6" evidence="2">
    <location>
        <begin position="416"/>
        <end position="438"/>
    </location>
</feature>
<feature type="zinc finger region" description="C2H2-type 7" evidence="2">
    <location>
        <begin position="444"/>
        <end position="466"/>
    </location>
</feature>
<feature type="zinc finger region" description="C2H2-type 8" evidence="2">
    <location>
        <begin position="472"/>
        <end position="494"/>
    </location>
</feature>
<feature type="region of interest" description="Disordered" evidence="3">
    <location>
        <begin position="1"/>
        <end position="118"/>
    </location>
</feature>
<feature type="region of interest" description="Disordered" evidence="3">
    <location>
        <begin position="492"/>
        <end position="541"/>
    </location>
</feature>
<feature type="compositionally biased region" description="Acidic residues" evidence="3">
    <location>
        <begin position="44"/>
        <end position="57"/>
    </location>
</feature>
<feature type="compositionally biased region" description="Basic and acidic residues" evidence="3">
    <location>
        <begin position="103"/>
        <end position="115"/>
    </location>
</feature>
<feature type="modified residue" description="Phosphoserine" evidence="9">
    <location>
        <position position="85"/>
    </location>
</feature>
<feature type="modified residue" description="Phosphoserine" evidence="1">
    <location>
        <position position="96"/>
    </location>
</feature>
<feature type="splice variant" id="VSP_035624" description="In isoform 3." evidence="7">
    <location>
        <begin position="1"/>
        <end position="334"/>
    </location>
</feature>
<feature type="splice variant" id="VSP_035625" description="In isoform 2." evidence="5 6">
    <location>
        <begin position="1"/>
        <end position="62"/>
    </location>
</feature>
<feature type="sequence variant" id="VAR_064926" description="In RP58; cannot bind to promoters of retinal-specific genes; dbSNP:rs267607182." evidence="4">
    <original>C</original>
    <variation>R</variation>
    <location>
        <position position="339"/>
    </location>
</feature>
<feature type="sequence conflict" description="In Ref. 2; BAD38657." evidence="8" ref="2">
    <original>K</original>
    <variation>R</variation>
    <location>
        <position position="166"/>
    </location>
</feature>
<feature type="sequence conflict" description="In Ref. 1; BAF83379." evidence="8" ref="1">
    <original>G</original>
    <variation>S</variation>
    <location>
        <position position="440"/>
    </location>
</feature>
<feature type="sequence conflict" description="In Ref. 1; BAC04903." evidence="8" ref="1">
    <original>H</original>
    <variation>Y</variation>
    <location>
        <position position="494"/>
    </location>
</feature>
<dbReference type="EMBL" id="AK056765">
    <property type="protein sequence ID" value="BAB71274.1"/>
    <property type="status" value="ALT_INIT"/>
    <property type="molecule type" value="mRNA"/>
</dbReference>
<dbReference type="EMBL" id="AK096933">
    <property type="protein sequence ID" value="BAC04903.1"/>
    <property type="molecule type" value="mRNA"/>
</dbReference>
<dbReference type="EMBL" id="AK290690">
    <property type="protein sequence ID" value="BAF83379.1"/>
    <property type="molecule type" value="mRNA"/>
</dbReference>
<dbReference type="EMBL" id="AB075875">
    <property type="protein sequence ID" value="BAD38657.1"/>
    <property type="molecule type" value="mRNA"/>
</dbReference>
<dbReference type="EMBL" id="AL833946">
    <property type="protein sequence ID" value="CAD38801.1"/>
    <property type="molecule type" value="mRNA"/>
</dbReference>
<dbReference type="EMBL" id="AC074117">
    <property type="protein sequence ID" value="AAY14845.1"/>
    <property type="molecule type" value="Genomic_DNA"/>
</dbReference>
<dbReference type="EMBL" id="CH471053">
    <property type="protein sequence ID" value="EAX00583.1"/>
    <property type="molecule type" value="Genomic_DNA"/>
</dbReference>
<dbReference type="EMBL" id="BC040650">
    <property type="protein sequence ID" value="AAH40650.1"/>
    <property type="molecule type" value="mRNA"/>
</dbReference>
<dbReference type="EMBL" id="BC052282">
    <property type="protein sequence ID" value="AAH52282.1"/>
    <property type="molecule type" value="mRNA"/>
</dbReference>
<dbReference type="CCDS" id="CCDS1751.1">
    <molecule id="Q8N8E2-1"/>
</dbReference>
<dbReference type="CCDS" id="CCDS56114.1">
    <molecule id="Q8N8E2-2"/>
</dbReference>
<dbReference type="RefSeq" id="NP_001188388.1">
    <molecule id="Q8N8E2-2"/>
    <property type="nucleotide sequence ID" value="NM_001201459.2"/>
</dbReference>
<dbReference type="RefSeq" id="NP_653232.3">
    <molecule id="Q8N8E2-1"/>
    <property type="nucleotide sequence ID" value="NM_144631.5"/>
</dbReference>
<dbReference type="RefSeq" id="XP_005264199.1">
    <property type="nucleotide sequence ID" value="XM_005264142.2"/>
</dbReference>
<dbReference type="RefSeq" id="XP_005264200.1">
    <property type="nucleotide sequence ID" value="XM_005264143.3"/>
</dbReference>
<dbReference type="SMR" id="Q8N8E2"/>
<dbReference type="BioGRID" id="126240">
    <property type="interactions" value="20"/>
</dbReference>
<dbReference type="FunCoup" id="Q8N8E2">
    <property type="interactions" value="1857"/>
</dbReference>
<dbReference type="IntAct" id="Q8N8E2">
    <property type="interactions" value="7"/>
</dbReference>
<dbReference type="STRING" id="9606.ENSP00000318373"/>
<dbReference type="GlyGen" id="Q8N8E2">
    <property type="glycosylation" value="4 sites"/>
</dbReference>
<dbReference type="iPTMnet" id="Q8N8E2"/>
<dbReference type="PhosphoSitePlus" id="Q8N8E2"/>
<dbReference type="BioMuta" id="ZNF513"/>
<dbReference type="DMDM" id="212276483"/>
<dbReference type="jPOST" id="Q8N8E2"/>
<dbReference type="MassIVE" id="Q8N8E2"/>
<dbReference type="PaxDb" id="9606-ENSP00000318373"/>
<dbReference type="PeptideAtlas" id="Q8N8E2"/>
<dbReference type="ProteomicsDB" id="72407">
    <molecule id="Q8N8E2-1"/>
</dbReference>
<dbReference type="ProteomicsDB" id="72408">
    <molecule id="Q8N8E2-2"/>
</dbReference>
<dbReference type="ProteomicsDB" id="72409">
    <molecule id="Q8N8E2-3"/>
</dbReference>
<dbReference type="Antibodypedia" id="55939">
    <property type="antibodies" value="71 antibodies from 17 providers"/>
</dbReference>
<dbReference type="DNASU" id="130557"/>
<dbReference type="Ensembl" id="ENST00000323703.11">
    <molecule id="Q8N8E2-1"/>
    <property type="protein sequence ID" value="ENSP00000318373.6"/>
    <property type="gene ID" value="ENSG00000163795.14"/>
</dbReference>
<dbReference type="Ensembl" id="ENST00000407879.1">
    <molecule id="Q8N8E2-2"/>
    <property type="protein sequence ID" value="ENSP00000384874.1"/>
    <property type="gene ID" value="ENSG00000163795.14"/>
</dbReference>
<dbReference type="GeneID" id="130557"/>
<dbReference type="KEGG" id="hsa:130557"/>
<dbReference type="MANE-Select" id="ENST00000323703.11">
    <property type="protein sequence ID" value="ENSP00000318373.6"/>
    <property type="RefSeq nucleotide sequence ID" value="NM_144631.6"/>
    <property type="RefSeq protein sequence ID" value="NP_653232.3"/>
</dbReference>
<dbReference type="UCSC" id="uc002rkj.4">
    <molecule id="Q8N8E2-1"/>
    <property type="organism name" value="human"/>
</dbReference>
<dbReference type="AGR" id="HGNC:26498"/>
<dbReference type="CTD" id="130557"/>
<dbReference type="DisGeNET" id="130557"/>
<dbReference type="GeneCards" id="ZNF513"/>
<dbReference type="GeneReviews" id="ZNF513"/>
<dbReference type="HGNC" id="HGNC:26498">
    <property type="gene designation" value="ZNF513"/>
</dbReference>
<dbReference type="HPA" id="ENSG00000163795">
    <property type="expression patterns" value="Low tissue specificity"/>
</dbReference>
<dbReference type="MalaCards" id="ZNF513"/>
<dbReference type="MIM" id="613598">
    <property type="type" value="gene"/>
</dbReference>
<dbReference type="MIM" id="613617">
    <property type="type" value="phenotype"/>
</dbReference>
<dbReference type="neXtProt" id="NX_Q8N8E2"/>
<dbReference type="OpenTargets" id="ENSG00000163795"/>
<dbReference type="Orphanet" id="791">
    <property type="disease" value="Retinitis pigmentosa"/>
</dbReference>
<dbReference type="PharmGKB" id="PA134872812"/>
<dbReference type="VEuPathDB" id="HostDB:ENSG00000163795"/>
<dbReference type="eggNOG" id="KOG1721">
    <property type="taxonomic scope" value="Eukaryota"/>
</dbReference>
<dbReference type="GeneTree" id="ENSGT00940000158687"/>
<dbReference type="HOGENOM" id="CLU_002678_58_1_1"/>
<dbReference type="InParanoid" id="Q8N8E2"/>
<dbReference type="OMA" id="SICGYSC"/>
<dbReference type="OrthoDB" id="654211at2759"/>
<dbReference type="PAN-GO" id="Q8N8E2">
    <property type="GO annotations" value="3 GO annotations based on evolutionary models"/>
</dbReference>
<dbReference type="PhylomeDB" id="Q8N8E2"/>
<dbReference type="TreeFam" id="TF350015"/>
<dbReference type="PathwayCommons" id="Q8N8E2"/>
<dbReference type="SignaLink" id="Q8N8E2"/>
<dbReference type="BioGRID-ORCS" id="130557">
    <property type="hits" value="23 hits in 1181 CRISPR screens"/>
</dbReference>
<dbReference type="ChiTaRS" id="ZNF513">
    <property type="organism name" value="human"/>
</dbReference>
<dbReference type="GenomeRNAi" id="130557"/>
<dbReference type="Pharos" id="Q8N8E2">
    <property type="development level" value="Tbio"/>
</dbReference>
<dbReference type="PRO" id="PR:Q8N8E2"/>
<dbReference type="Proteomes" id="UP000005640">
    <property type="component" value="Chromosome 2"/>
</dbReference>
<dbReference type="RNAct" id="Q8N8E2">
    <property type="molecule type" value="protein"/>
</dbReference>
<dbReference type="Bgee" id="ENSG00000163795">
    <property type="expression patterns" value="Expressed in right testis and 154 other cell types or tissues"/>
</dbReference>
<dbReference type="ExpressionAtlas" id="Q8N8E2">
    <property type="expression patterns" value="baseline and differential"/>
</dbReference>
<dbReference type="GO" id="GO:0005634">
    <property type="term" value="C:nucleus"/>
    <property type="evidence" value="ECO:0000314"/>
    <property type="project" value="UniProtKB"/>
</dbReference>
<dbReference type="GO" id="GO:0003677">
    <property type="term" value="F:DNA binding"/>
    <property type="evidence" value="ECO:0000314"/>
    <property type="project" value="UniProtKB"/>
</dbReference>
<dbReference type="GO" id="GO:0000976">
    <property type="term" value="F:transcription cis-regulatory region binding"/>
    <property type="evidence" value="ECO:0000314"/>
    <property type="project" value="UniProtKB"/>
</dbReference>
<dbReference type="GO" id="GO:0008270">
    <property type="term" value="F:zinc ion binding"/>
    <property type="evidence" value="ECO:0007669"/>
    <property type="project" value="UniProtKB-KW"/>
</dbReference>
<dbReference type="GO" id="GO:0045944">
    <property type="term" value="P:positive regulation of transcription by RNA polymerase II"/>
    <property type="evidence" value="ECO:0000318"/>
    <property type="project" value="GO_Central"/>
</dbReference>
<dbReference type="GO" id="GO:0060041">
    <property type="term" value="P:retina development in camera-type eye"/>
    <property type="evidence" value="ECO:0000315"/>
    <property type="project" value="UniProtKB"/>
</dbReference>
<dbReference type="GO" id="GO:0007601">
    <property type="term" value="P:visual perception"/>
    <property type="evidence" value="ECO:0007669"/>
    <property type="project" value="UniProtKB-KW"/>
</dbReference>
<dbReference type="FunFam" id="3.30.160.60:FF:000049">
    <property type="entry name" value="transcriptional repressor CTCF isoform X1"/>
    <property type="match status" value="2"/>
</dbReference>
<dbReference type="FunFam" id="3.30.160.60:FF:000123">
    <property type="entry name" value="transcriptional repressor CTCF isoform X1"/>
    <property type="match status" value="1"/>
</dbReference>
<dbReference type="FunFam" id="3.30.160.60:FF:000584">
    <property type="entry name" value="Zinc finger protein 513"/>
    <property type="match status" value="1"/>
</dbReference>
<dbReference type="FunFam" id="3.30.160.60:FF:000713">
    <property type="entry name" value="Zinc finger protein 513"/>
    <property type="match status" value="1"/>
</dbReference>
<dbReference type="FunFam" id="3.30.160.60:FF:000395">
    <property type="entry name" value="zinc finger protein 513"/>
    <property type="match status" value="1"/>
</dbReference>
<dbReference type="FunFam" id="3.30.160.60:FF:000962">
    <property type="entry name" value="zinc finger protein 513 isoform X1"/>
    <property type="match status" value="1"/>
</dbReference>
<dbReference type="FunFam" id="3.30.160.60:FF:000558">
    <property type="entry name" value="zinc finger protein 513 isoform X2"/>
    <property type="match status" value="1"/>
</dbReference>
<dbReference type="Gene3D" id="3.30.160.60">
    <property type="entry name" value="Classic Zinc Finger"/>
    <property type="match status" value="8"/>
</dbReference>
<dbReference type="InterPro" id="IPR036236">
    <property type="entry name" value="Znf_C2H2_sf"/>
</dbReference>
<dbReference type="InterPro" id="IPR013087">
    <property type="entry name" value="Znf_C2H2_type"/>
</dbReference>
<dbReference type="PANTHER" id="PTHR24379:SF121">
    <property type="entry name" value="C2H2-TYPE DOMAIN-CONTAINING PROTEIN"/>
    <property type="match status" value="1"/>
</dbReference>
<dbReference type="PANTHER" id="PTHR24379">
    <property type="entry name" value="KRAB AND ZINC FINGER DOMAIN-CONTAINING"/>
    <property type="match status" value="1"/>
</dbReference>
<dbReference type="Pfam" id="PF00096">
    <property type="entry name" value="zf-C2H2"/>
    <property type="match status" value="5"/>
</dbReference>
<dbReference type="SMART" id="SM00355">
    <property type="entry name" value="ZnF_C2H2"/>
    <property type="match status" value="8"/>
</dbReference>
<dbReference type="SUPFAM" id="SSF57667">
    <property type="entry name" value="beta-beta-alpha zinc fingers"/>
    <property type="match status" value="5"/>
</dbReference>
<dbReference type="PROSITE" id="PS00028">
    <property type="entry name" value="ZINC_FINGER_C2H2_1"/>
    <property type="match status" value="3"/>
</dbReference>
<dbReference type="PROSITE" id="PS50157">
    <property type="entry name" value="ZINC_FINGER_C2H2_2"/>
    <property type="match status" value="7"/>
</dbReference>
<gene>
    <name type="primary">ZNF513</name>
</gene>
<protein>
    <recommendedName>
        <fullName>Zinc finger protein 513</fullName>
    </recommendedName>
</protein>
<sequence>MPRRKQSHPQPVKCEGVKVDTEDSLDEGPGALVLESDLLLGQDLEFEEEEEEEEGDGNSDQLMGFERDSEGDSLGARPGLPYGLSDDESGGGRALSAESEVEEPARGPGEARGERPGPACQLCGGPTGEGPCCGAGGPGGGPLLPPRLLYSCRLCTFVSHYSSHLKRHMQTHSGEKPFRCGRCPYASAQLVNLTRHTRTHTGEKPYRCPHCPFACSSLGNLRRHQRTHAGPPTPPCPTCGFRCCTPRPARPPSPTEQEGAVPRRPEDALLLPDLSLHVPPGGASFLPDCGQLRGEGEGLCGTGSEPLPELLFPWTCRGCGQELEEGEGSRLGAAMCGRCMRGEAGGGASGGPQGPSDKGFACSLCPFATHYPNHLARHMKTHSGEKPFRCARCPYASAHLDNLKRHQRVHTGEKPYKCPLCPYACGNLANLKRHGRIHSGDKPFRCSLCNYSCNQSMNLKRHMLRHTGEKPFRCATCAYTTGHWDNYKRHQKVHGHGGAGGPGLSASEGWAPPHSPPSVLSSRGPPALGTAGSRAVHTDSS</sequence>
<organism>
    <name type="scientific">Homo sapiens</name>
    <name type="common">Human</name>
    <dbReference type="NCBI Taxonomy" id="9606"/>
    <lineage>
        <taxon>Eukaryota</taxon>
        <taxon>Metazoa</taxon>
        <taxon>Chordata</taxon>
        <taxon>Craniata</taxon>
        <taxon>Vertebrata</taxon>
        <taxon>Euteleostomi</taxon>
        <taxon>Mammalia</taxon>
        <taxon>Eutheria</taxon>
        <taxon>Euarchontoglires</taxon>
        <taxon>Primates</taxon>
        <taxon>Haplorrhini</taxon>
        <taxon>Catarrhini</taxon>
        <taxon>Hominidae</taxon>
        <taxon>Homo</taxon>
    </lineage>
</organism>
<accession>Q8N8E2</accession>
<accession>A8K3S5</accession>
<accession>B7WP71</accession>
<accession>Q3ZCU1</accession>
<accession>Q68CJ1</accession>
<accession>Q86UZ3</accession>
<accession>Q8NDL8</accession>
<accession>Q96ML3</accession>
<name>ZN513_HUMAN</name>
<reference key="1">
    <citation type="journal article" date="2004" name="Nat. Genet.">
        <title>Complete sequencing and characterization of 21,243 full-length human cDNAs.</title>
        <authorList>
            <person name="Ota T."/>
            <person name="Suzuki Y."/>
            <person name="Nishikawa T."/>
            <person name="Otsuki T."/>
            <person name="Sugiyama T."/>
            <person name="Irie R."/>
            <person name="Wakamatsu A."/>
            <person name="Hayashi K."/>
            <person name="Sato H."/>
            <person name="Nagai K."/>
            <person name="Kimura K."/>
            <person name="Makita H."/>
            <person name="Sekine M."/>
            <person name="Obayashi M."/>
            <person name="Nishi T."/>
            <person name="Shibahara T."/>
            <person name="Tanaka T."/>
            <person name="Ishii S."/>
            <person name="Yamamoto J."/>
            <person name="Saito K."/>
            <person name="Kawai Y."/>
            <person name="Isono Y."/>
            <person name="Nakamura Y."/>
            <person name="Nagahari K."/>
            <person name="Murakami K."/>
            <person name="Yasuda T."/>
            <person name="Iwayanagi T."/>
            <person name="Wagatsuma M."/>
            <person name="Shiratori A."/>
            <person name="Sudo H."/>
            <person name="Hosoiri T."/>
            <person name="Kaku Y."/>
            <person name="Kodaira H."/>
            <person name="Kondo H."/>
            <person name="Sugawara M."/>
            <person name="Takahashi M."/>
            <person name="Kanda K."/>
            <person name="Yokoi T."/>
            <person name="Furuya T."/>
            <person name="Kikkawa E."/>
            <person name="Omura Y."/>
            <person name="Abe K."/>
            <person name="Kamihara K."/>
            <person name="Katsuta N."/>
            <person name="Sato K."/>
            <person name="Tanikawa M."/>
            <person name="Yamazaki M."/>
            <person name="Ninomiya K."/>
            <person name="Ishibashi T."/>
            <person name="Yamashita H."/>
            <person name="Murakawa K."/>
            <person name="Fujimori K."/>
            <person name="Tanai H."/>
            <person name="Kimata M."/>
            <person name="Watanabe M."/>
            <person name="Hiraoka S."/>
            <person name="Chiba Y."/>
            <person name="Ishida S."/>
            <person name="Ono Y."/>
            <person name="Takiguchi S."/>
            <person name="Watanabe S."/>
            <person name="Yosida M."/>
            <person name="Hotuta T."/>
            <person name="Kusano J."/>
            <person name="Kanehori K."/>
            <person name="Takahashi-Fujii A."/>
            <person name="Hara H."/>
            <person name="Tanase T.-O."/>
            <person name="Nomura Y."/>
            <person name="Togiya S."/>
            <person name="Komai F."/>
            <person name="Hara R."/>
            <person name="Takeuchi K."/>
            <person name="Arita M."/>
            <person name="Imose N."/>
            <person name="Musashino K."/>
            <person name="Yuuki H."/>
            <person name="Oshima A."/>
            <person name="Sasaki N."/>
            <person name="Aotsuka S."/>
            <person name="Yoshikawa Y."/>
            <person name="Matsunawa H."/>
            <person name="Ichihara T."/>
            <person name="Shiohata N."/>
            <person name="Sano S."/>
            <person name="Moriya S."/>
            <person name="Momiyama H."/>
            <person name="Satoh N."/>
            <person name="Takami S."/>
            <person name="Terashima Y."/>
            <person name="Suzuki O."/>
            <person name="Nakagawa S."/>
            <person name="Senoh A."/>
            <person name="Mizoguchi H."/>
            <person name="Goto Y."/>
            <person name="Shimizu F."/>
            <person name="Wakebe H."/>
            <person name="Hishigaki H."/>
            <person name="Watanabe T."/>
            <person name="Sugiyama A."/>
            <person name="Takemoto M."/>
            <person name="Kawakami B."/>
            <person name="Yamazaki M."/>
            <person name="Watanabe K."/>
            <person name="Kumagai A."/>
            <person name="Itakura S."/>
            <person name="Fukuzumi Y."/>
            <person name="Fujimori Y."/>
            <person name="Komiyama M."/>
            <person name="Tashiro H."/>
            <person name="Tanigami A."/>
            <person name="Fujiwara T."/>
            <person name="Ono T."/>
            <person name="Yamada K."/>
            <person name="Fujii Y."/>
            <person name="Ozaki K."/>
            <person name="Hirao M."/>
            <person name="Ohmori Y."/>
            <person name="Kawabata A."/>
            <person name="Hikiji T."/>
            <person name="Kobatake N."/>
            <person name="Inagaki H."/>
            <person name="Ikema Y."/>
            <person name="Okamoto S."/>
            <person name="Okitani R."/>
            <person name="Kawakami T."/>
            <person name="Noguchi S."/>
            <person name="Itoh T."/>
            <person name="Shigeta K."/>
            <person name="Senba T."/>
            <person name="Matsumura K."/>
            <person name="Nakajima Y."/>
            <person name="Mizuno T."/>
            <person name="Morinaga M."/>
            <person name="Sasaki M."/>
            <person name="Togashi T."/>
            <person name="Oyama M."/>
            <person name="Hata H."/>
            <person name="Watanabe M."/>
            <person name="Komatsu T."/>
            <person name="Mizushima-Sugano J."/>
            <person name="Satoh T."/>
            <person name="Shirai Y."/>
            <person name="Takahashi Y."/>
            <person name="Nakagawa K."/>
            <person name="Okumura K."/>
            <person name="Nagase T."/>
            <person name="Nomura N."/>
            <person name="Kikuchi H."/>
            <person name="Masuho Y."/>
            <person name="Yamashita R."/>
            <person name="Nakai K."/>
            <person name="Yada T."/>
            <person name="Nakamura Y."/>
            <person name="Ohara O."/>
            <person name="Isogai T."/>
            <person name="Sugano S."/>
        </authorList>
    </citation>
    <scope>NUCLEOTIDE SEQUENCE [LARGE SCALE MRNA] (ISOFORM 2)</scope>
    <scope>NUCLEOTIDE SEQUENCE [LARGE SCALE MRNA] OF 160-541 (ISOFORMS 1/2)</scope>
    <source>
        <tissue>Placenta</tissue>
        <tissue>Small intestine</tissue>
    </source>
</reference>
<reference key="2">
    <citation type="journal article" date="2004" name="Oncogene">
        <title>Expression profiling and differential screening between hepatoblastomas and the corresponding normal livers: identification of high expression of the PLK1 oncogene as a poor-prognostic indicator of hepatoblastomas.</title>
        <authorList>
            <person name="Yamada S."/>
            <person name="Ohira M."/>
            <person name="Horie H."/>
            <person name="Ando K."/>
            <person name="Takayasu H."/>
            <person name="Suzuki Y."/>
            <person name="Sugano S."/>
            <person name="Hirata T."/>
            <person name="Goto T."/>
            <person name="Matsunaga T."/>
            <person name="Hiyama E."/>
            <person name="Hayashi Y."/>
            <person name="Ando H."/>
            <person name="Suita S."/>
            <person name="Kaneko M."/>
            <person name="Sasaki F."/>
            <person name="Hashizume K."/>
            <person name="Ohnuma N."/>
            <person name="Nakagawara A."/>
        </authorList>
    </citation>
    <scope>NUCLEOTIDE SEQUENCE [LARGE SCALE MRNA] (ISOFORM 2)</scope>
    <source>
        <tissue>Hepatoblastoma</tissue>
    </source>
</reference>
<reference key="3">
    <citation type="journal article" date="2007" name="BMC Genomics">
        <title>The full-ORF clone resource of the German cDNA consortium.</title>
        <authorList>
            <person name="Bechtel S."/>
            <person name="Rosenfelder H."/>
            <person name="Duda A."/>
            <person name="Schmidt C.P."/>
            <person name="Ernst U."/>
            <person name="Wellenreuther R."/>
            <person name="Mehrle A."/>
            <person name="Schuster C."/>
            <person name="Bahr A."/>
            <person name="Bloecker H."/>
            <person name="Heubner D."/>
            <person name="Hoerlein A."/>
            <person name="Michel G."/>
            <person name="Wedler H."/>
            <person name="Koehrer K."/>
            <person name="Ottenwaelder B."/>
            <person name="Poustka A."/>
            <person name="Wiemann S."/>
            <person name="Schupp I."/>
        </authorList>
    </citation>
    <scope>NUCLEOTIDE SEQUENCE [LARGE SCALE MRNA] (ISOFORM 3)</scope>
    <source>
        <tissue>Testis</tissue>
    </source>
</reference>
<reference key="4">
    <citation type="journal article" date="2005" name="Nature">
        <title>Generation and annotation of the DNA sequences of human chromosomes 2 and 4.</title>
        <authorList>
            <person name="Hillier L.W."/>
            <person name="Graves T.A."/>
            <person name="Fulton R.S."/>
            <person name="Fulton L.A."/>
            <person name="Pepin K.H."/>
            <person name="Minx P."/>
            <person name="Wagner-McPherson C."/>
            <person name="Layman D."/>
            <person name="Wylie K."/>
            <person name="Sekhon M."/>
            <person name="Becker M.C."/>
            <person name="Fewell G.A."/>
            <person name="Delehaunty K.D."/>
            <person name="Miner T.L."/>
            <person name="Nash W.E."/>
            <person name="Kremitzki C."/>
            <person name="Oddy L."/>
            <person name="Du H."/>
            <person name="Sun H."/>
            <person name="Bradshaw-Cordum H."/>
            <person name="Ali J."/>
            <person name="Carter J."/>
            <person name="Cordes M."/>
            <person name="Harris A."/>
            <person name="Isak A."/>
            <person name="van Brunt A."/>
            <person name="Nguyen C."/>
            <person name="Du F."/>
            <person name="Courtney L."/>
            <person name="Kalicki J."/>
            <person name="Ozersky P."/>
            <person name="Abbott S."/>
            <person name="Armstrong J."/>
            <person name="Belter E.A."/>
            <person name="Caruso L."/>
            <person name="Cedroni M."/>
            <person name="Cotton M."/>
            <person name="Davidson T."/>
            <person name="Desai A."/>
            <person name="Elliott G."/>
            <person name="Erb T."/>
            <person name="Fronick C."/>
            <person name="Gaige T."/>
            <person name="Haakenson W."/>
            <person name="Haglund K."/>
            <person name="Holmes A."/>
            <person name="Harkins R."/>
            <person name="Kim K."/>
            <person name="Kruchowski S.S."/>
            <person name="Strong C.M."/>
            <person name="Grewal N."/>
            <person name="Goyea E."/>
            <person name="Hou S."/>
            <person name="Levy A."/>
            <person name="Martinka S."/>
            <person name="Mead K."/>
            <person name="McLellan M.D."/>
            <person name="Meyer R."/>
            <person name="Randall-Maher J."/>
            <person name="Tomlinson C."/>
            <person name="Dauphin-Kohlberg S."/>
            <person name="Kozlowicz-Reilly A."/>
            <person name="Shah N."/>
            <person name="Swearengen-Shahid S."/>
            <person name="Snider J."/>
            <person name="Strong J.T."/>
            <person name="Thompson J."/>
            <person name="Yoakum M."/>
            <person name="Leonard S."/>
            <person name="Pearman C."/>
            <person name="Trani L."/>
            <person name="Radionenko M."/>
            <person name="Waligorski J.E."/>
            <person name="Wang C."/>
            <person name="Rock S.M."/>
            <person name="Tin-Wollam A.-M."/>
            <person name="Maupin R."/>
            <person name="Latreille P."/>
            <person name="Wendl M.C."/>
            <person name="Yang S.-P."/>
            <person name="Pohl C."/>
            <person name="Wallis J.W."/>
            <person name="Spieth J."/>
            <person name="Bieri T.A."/>
            <person name="Berkowicz N."/>
            <person name="Nelson J.O."/>
            <person name="Osborne J."/>
            <person name="Ding L."/>
            <person name="Meyer R."/>
            <person name="Sabo A."/>
            <person name="Shotland Y."/>
            <person name="Sinha P."/>
            <person name="Wohldmann P.E."/>
            <person name="Cook L.L."/>
            <person name="Hickenbotham M.T."/>
            <person name="Eldred J."/>
            <person name="Williams D."/>
            <person name="Jones T.A."/>
            <person name="She X."/>
            <person name="Ciccarelli F.D."/>
            <person name="Izaurralde E."/>
            <person name="Taylor J."/>
            <person name="Schmutz J."/>
            <person name="Myers R.M."/>
            <person name="Cox D.R."/>
            <person name="Huang X."/>
            <person name="McPherson J.D."/>
            <person name="Mardis E.R."/>
            <person name="Clifton S.W."/>
            <person name="Warren W.C."/>
            <person name="Chinwalla A.T."/>
            <person name="Eddy S.R."/>
            <person name="Marra M.A."/>
            <person name="Ovcharenko I."/>
            <person name="Furey T.S."/>
            <person name="Miller W."/>
            <person name="Eichler E.E."/>
            <person name="Bork P."/>
            <person name="Suyama M."/>
            <person name="Torrents D."/>
            <person name="Waterston R.H."/>
            <person name="Wilson R.K."/>
        </authorList>
    </citation>
    <scope>NUCLEOTIDE SEQUENCE [LARGE SCALE GENOMIC DNA]</scope>
</reference>
<reference key="5">
    <citation type="submission" date="2005-09" db="EMBL/GenBank/DDBJ databases">
        <authorList>
            <person name="Mural R.J."/>
            <person name="Istrail S."/>
            <person name="Sutton G.G."/>
            <person name="Florea L."/>
            <person name="Halpern A.L."/>
            <person name="Mobarry C.M."/>
            <person name="Lippert R."/>
            <person name="Walenz B."/>
            <person name="Shatkay H."/>
            <person name="Dew I."/>
            <person name="Miller J.R."/>
            <person name="Flanigan M.J."/>
            <person name="Edwards N.J."/>
            <person name="Bolanos R."/>
            <person name="Fasulo D."/>
            <person name="Halldorsson B.V."/>
            <person name="Hannenhalli S."/>
            <person name="Turner R."/>
            <person name="Yooseph S."/>
            <person name="Lu F."/>
            <person name="Nusskern D.R."/>
            <person name="Shue B.C."/>
            <person name="Zheng X.H."/>
            <person name="Zhong F."/>
            <person name="Delcher A.L."/>
            <person name="Huson D.H."/>
            <person name="Kravitz S.A."/>
            <person name="Mouchard L."/>
            <person name="Reinert K."/>
            <person name="Remington K.A."/>
            <person name="Clark A.G."/>
            <person name="Waterman M.S."/>
            <person name="Eichler E.E."/>
            <person name="Adams M.D."/>
            <person name="Hunkapiller M.W."/>
            <person name="Myers E.W."/>
            <person name="Venter J.C."/>
        </authorList>
    </citation>
    <scope>NUCLEOTIDE SEQUENCE [LARGE SCALE GENOMIC DNA]</scope>
</reference>
<reference key="6">
    <citation type="journal article" date="2004" name="Genome Res.">
        <title>The status, quality, and expansion of the NIH full-length cDNA project: the Mammalian Gene Collection (MGC).</title>
        <authorList>
            <consortium name="The MGC Project Team"/>
        </authorList>
    </citation>
    <scope>NUCLEOTIDE SEQUENCE [LARGE SCALE MRNA] (ISOFORM 1)</scope>
    <scope>NUCLEOTIDE SEQUENCE [LARGE SCALE MRNA] OF 164-541 (ISOFORMS 1/2)</scope>
    <source>
        <tissue>Brain</tissue>
        <tissue>Skin</tissue>
    </source>
</reference>
<reference key="7">
    <citation type="journal article" date="2010" name="Am. J. Hum. Genet.">
        <title>A mutation in ZNF513, a putative regulator of photoreceptor development, causes autosomal-recessive retinitis pigmentosa.</title>
        <authorList>
            <person name="Li L."/>
            <person name="Nakaya N."/>
            <person name="Chavali V.R."/>
            <person name="Ma Z."/>
            <person name="Jiao X."/>
            <person name="Sieving P.A."/>
            <person name="Riazuddin S."/>
            <person name="Tomarev S.I."/>
            <person name="Ayyagari R."/>
            <person name="Riazuddin S.A."/>
            <person name="Hejtmancik J.F."/>
        </authorList>
    </citation>
    <scope>FUNCTION</scope>
    <scope>SUBCELLULAR LOCATION</scope>
    <scope>TISSUE SPECIFICITY</scope>
    <scope>SUBUNIT</scope>
    <scope>VARIANT RP58 ARG-339</scope>
    <scope>CHARACTERIZATION OF VARIANT RP58 ARG-339</scope>
</reference>
<reference key="8">
    <citation type="journal article" date="2011" name="Sci. Signal.">
        <title>System-wide temporal characterization of the proteome and phosphoproteome of human embryonic stem cell differentiation.</title>
        <authorList>
            <person name="Rigbolt K.T."/>
            <person name="Prokhorova T.A."/>
            <person name="Akimov V."/>
            <person name="Henningsen J."/>
            <person name="Johansen P.T."/>
            <person name="Kratchmarova I."/>
            <person name="Kassem M."/>
            <person name="Mann M."/>
            <person name="Olsen J.V."/>
            <person name="Blagoev B."/>
        </authorList>
    </citation>
    <scope>IDENTIFICATION BY MASS SPECTROMETRY [LARGE SCALE ANALYSIS]</scope>
</reference>
<reference key="9">
    <citation type="journal article" date="2013" name="J. Proteome Res.">
        <title>Toward a comprehensive characterization of a human cancer cell phosphoproteome.</title>
        <authorList>
            <person name="Zhou H."/>
            <person name="Di Palma S."/>
            <person name="Preisinger C."/>
            <person name="Peng M."/>
            <person name="Polat A.N."/>
            <person name="Heck A.J."/>
            <person name="Mohammed S."/>
        </authorList>
    </citation>
    <scope>PHOSPHORYLATION [LARGE SCALE ANALYSIS] AT SER-85</scope>
    <scope>IDENTIFICATION BY MASS SPECTROMETRY [LARGE SCALE ANALYSIS]</scope>
    <source>
        <tissue>Erythroleukemia</tissue>
    </source>
</reference>
<comment type="function">
    <text evidence="4">Transcriptional regulator that plays a role in retinal development and maintenance.</text>
</comment>
<comment type="subunit">
    <text evidence="4">Binds DNA. Can associate with the proximal promoter regions of PAX6 and SP4, and their known targets including ARR3, RHO, OPN1MW2 and OPN1SW.</text>
</comment>
<comment type="interaction">
    <interactant intactId="EBI-10279993">
        <id>Q8N8E2</id>
    </interactant>
    <interactant intactId="EBI-923653">
        <id>Q9Y6K1</id>
        <label>DNMT3A</label>
    </interactant>
    <organismsDiffer>false</organismsDiffer>
    <experiments>3</experiments>
</comment>
<comment type="interaction">
    <interactant intactId="EBI-10279993">
        <id>Q8N8E2</id>
    </interactant>
    <interactant intactId="EBI-399080">
        <id>Q92993</id>
        <label>KAT5</label>
    </interactant>
    <organismsDiffer>false</organismsDiffer>
    <experiments>3</experiments>
</comment>
<comment type="interaction">
    <interactant intactId="EBI-10279993">
        <id>Q8N8E2</id>
    </interactant>
    <interactant intactId="EBI-1052596">
        <id>P31930</id>
        <label>UQCRC1</label>
    </interactant>
    <organismsDiffer>false</organismsDiffer>
    <experiments>3</experiments>
</comment>
<comment type="subcellular location">
    <subcellularLocation>
        <location evidence="4">Nucleus</location>
    </subcellularLocation>
</comment>
<comment type="alternative products">
    <event type="alternative splicing"/>
    <isoform>
        <id>Q8N8E2-1</id>
        <name>1</name>
        <sequence type="displayed"/>
    </isoform>
    <isoform>
        <id>Q8N8E2-2</id>
        <name>2</name>
        <sequence type="described" ref="VSP_035625"/>
    </isoform>
    <isoform>
        <id>Q8N8E2-3</id>
        <name>3</name>
        <sequence type="described" ref="VSP_035624"/>
    </isoform>
</comment>
<comment type="tissue specificity">
    <text evidence="4">In the retina, expressed in the outer and inner nuclear layers, and the ganglion cell layer.</text>
</comment>
<comment type="disease" evidence="4">
    <disease id="DI-02909">
        <name>Retinitis pigmentosa 58</name>
        <acronym>RP58</acronym>
        <description>A retinal dystrophy belonging to the group of pigmentary retinopathies. Retinitis pigmentosa is characterized by retinal pigment deposits visible on fundus examination and primary loss of rod photoreceptor cells followed by secondary loss of cone photoreceptors. Patients typically have night vision blindness and loss of midperipheral visual field. As their condition progresses, they lose their far peripheral visual field and eventually central vision as well.</description>
        <dbReference type="MIM" id="613617"/>
    </disease>
    <text>The disease is caused by variants affecting the gene represented in this entry.</text>
</comment>
<comment type="similarity">
    <text evidence="8">Belongs to the krueppel C2H2-type zinc-finger protein family.</text>
</comment>
<comment type="sequence caution" evidence="8">
    <conflict type="erroneous initiation">
        <sequence resource="EMBL-CDS" id="BAB71274"/>
    </conflict>
</comment>
<keyword id="KW-0025">Alternative splicing</keyword>
<keyword id="KW-0225">Disease variant</keyword>
<keyword id="KW-0238">DNA-binding</keyword>
<keyword id="KW-0479">Metal-binding</keyword>
<keyword id="KW-0539">Nucleus</keyword>
<keyword id="KW-0597">Phosphoprotein</keyword>
<keyword id="KW-1267">Proteomics identification</keyword>
<keyword id="KW-1185">Reference proteome</keyword>
<keyword id="KW-0677">Repeat</keyword>
<keyword id="KW-0682">Retinitis pigmentosa</keyword>
<keyword id="KW-0716">Sensory transduction</keyword>
<keyword id="KW-0804">Transcription</keyword>
<keyword id="KW-0805">Transcription regulation</keyword>
<keyword id="KW-0844">Vision</keyword>
<keyword id="KW-0862">Zinc</keyword>
<keyword id="KW-0863">Zinc-finger</keyword>
<proteinExistence type="evidence at protein level"/>
<evidence type="ECO:0000250" key="1">
    <source>
        <dbReference type="UniProtKB" id="Q6PD29"/>
    </source>
</evidence>
<evidence type="ECO:0000255" key="2">
    <source>
        <dbReference type="PROSITE-ProRule" id="PRU00042"/>
    </source>
</evidence>
<evidence type="ECO:0000256" key="3">
    <source>
        <dbReference type="SAM" id="MobiDB-lite"/>
    </source>
</evidence>
<evidence type="ECO:0000269" key="4">
    <source>
    </source>
</evidence>
<evidence type="ECO:0000303" key="5">
    <source>
    </source>
</evidence>
<evidence type="ECO:0000303" key="6">
    <source>
    </source>
</evidence>
<evidence type="ECO:0000303" key="7">
    <source>
    </source>
</evidence>
<evidence type="ECO:0000305" key="8"/>
<evidence type="ECO:0007744" key="9">
    <source>
    </source>
</evidence>